<organism>
    <name type="scientific">Vibrio cholerae serotype O1 (strain ATCC 39315 / El Tor Inaba N16961)</name>
    <dbReference type="NCBI Taxonomy" id="243277"/>
    <lineage>
        <taxon>Bacteria</taxon>
        <taxon>Pseudomonadati</taxon>
        <taxon>Pseudomonadota</taxon>
        <taxon>Gammaproteobacteria</taxon>
        <taxon>Vibrionales</taxon>
        <taxon>Vibrionaceae</taxon>
        <taxon>Vibrio</taxon>
    </lineage>
</organism>
<accession>Q9KU07</accession>
<accession>O86073</accession>
<reference key="1">
    <citation type="submission" date="1998-08" db="EMBL/GenBank/DDBJ databases">
        <title>The polyphosphate kinase and exopolyphosphatase genes of Vibrio cholerae.</title>
        <authorList>
            <person name="Ogawa N."/>
            <person name="Fraley C."/>
            <person name="Kornberg A."/>
        </authorList>
    </citation>
    <scope>NUCLEOTIDE SEQUENCE [GENOMIC DNA]</scope>
    <source>
        <strain>El Tor Inaba 92A1552</strain>
    </source>
</reference>
<reference key="2">
    <citation type="journal article" date="2000" name="Nature">
        <title>DNA sequence of both chromosomes of the cholera pathogen Vibrio cholerae.</title>
        <authorList>
            <person name="Heidelberg J.F."/>
            <person name="Eisen J.A."/>
            <person name="Nelson W.C."/>
            <person name="Clayton R.A."/>
            <person name="Gwinn M.L."/>
            <person name="Dodson R.J."/>
            <person name="Haft D.H."/>
            <person name="Hickey E.K."/>
            <person name="Peterson J.D."/>
            <person name="Umayam L.A."/>
            <person name="Gill S.R."/>
            <person name="Nelson K.E."/>
            <person name="Read T.D."/>
            <person name="Tettelin H."/>
            <person name="Richardson D.L."/>
            <person name="Ermolaeva M.D."/>
            <person name="Vamathevan J.J."/>
            <person name="Bass S."/>
            <person name="Qin H."/>
            <person name="Dragoi I."/>
            <person name="Sellers P."/>
            <person name="McDonald L.A."/>
            <person name="Utterback T.R."/>
            <person name="Fleischmann R.D."/>
            <person name="Nierman W.C."/>
            <person name="White O."/>
            <person name="Salzberg S.L."/>
            <person name="Smith H.O."/>
            <person name="Colwell R.R."/>
            <person name="Mekalanos J.J."/>
            <person name="Venter J.C."/>
            <person name="Fraser C.M."/>
        </authorList>
    </citation>
    <scope>NUCLEOTIDE SEQUENCE [LARGE SCALE GENOMIC DNA]</scope>
    <source>
        <strain>ATCC 39315 / El Tor Inaba N16961</strain>
    </source>
</reference>
<name>PPK1_VIBCH</name>
<feature type="chain" id="PRO_0000128666" description="Polyphosphate kinase">
    <location>
        <begin position="1"/>
        <end position="701"/>
    </location>
</feature>
<feature type="domain" description="PLD phosphodiesterase 1" evidence="1">
    <location>
        <begin position="428"/>
        <end position="462"/>
    </location>
</feature>
<feature type="domain" description="PLD phosphodiesterase 2" evidence="1">
    <location>
        <begin position="585"/>
        <end position="615"/>
    </location>
</feature>
<feature type="active site" description="Phosphohistidine intermediate" evidence="1">
    <location>
        <position position="433"/>
    </location>
</feature>
<feature type="binding site" evidence="1">
    <location>
        <position position="45"/>
    </location>
    <ligand>
        <name>ATP</name>
        <dbReference type="ChEBI" id="CHEBI:30616"/>
    </ligand>
</feature>
<feature type="binding site" evidence="1">
    <location>
        <position position="373"/>
    </location>
    <ligand>
        <name>Mg(2+)</name>
        <dbReference type="ChEBI" id="CHEBI:18420"/>
    </ligand>
</feature>
<feature type="binding site" evidence="1">
    <location>
        <position position="403"/>
    </location>
    <ligand>
        <name>Mg(2+)</name>
        <dbReference type="ChEBI" id="CHEBI:18420"/>
    </ligand>
</feature>
<feature type="binding site" evidence="1">
    <location>
        <position position="466"/>
    </location>
    <ligand>
        <name>ATP</name>
        <dbReference type="ChEBI" id="CHEBI:30616"/>
    </ligand>
</feature>
<feature type="binding site" evidence="1">
    <location>
        <position position="562"/>
    </location>
    <ligand>
        <name>ATP</name>
        <dbReference type="ChEBI" id="CHEBI:30616"/>
    </ligand>
</feature>
<feature type="binding site" evidence="1">
    <location>
        <position position="590"/>
    </location>
    <ligand>
        <name>ATP</name>
        <dbReference type="ChEBI" id="CHEBI:30616"/>
    </ligand>
</feature>
<feature type="sequence conflict" description="In Ref. 1; AAC32883." evidence="2" ref="1">
    <original>EV</original>
    <variation>VM</variation>
    <location>
        <begin position="130"/>
        <end position="131"/>
    </location>
</feature>
<evidence type="ECO:0000255" key="1">
    <source>
        <dbReference type="HAMAP-Rule" id="MF_00347"/>
    </source>
</evidence>
<evidence type="ECO:0000305" key="2"/>
<protein>
    <recommendedName>
        <fullName evidence="1">Polyphosphate kinase</fullName>
        <ecNumber evidence="1">2.7.4.1</ecNumber>
    </recommendedName>
    <alternativeName>
        <fullName evidence="1">ATP-polyphosphate phosphotransferase</fullName>
    </alternativeName>
    <alternativeName>
        <fullName evidence="1">Polyphosphoric acid kinase</fullName>
    </alternativeName>
</protein>
<dbReference type="EC" id="2.7.4.1" evidence="1"/>
<dbReference type="EMBL" id="AF083928">
    <property type="protein sequence ID" value="AAC32883.1"/>
    <property type="molecule type" value="Genomic_DNA"/>
</dbReference>
<dbReference type="EMBL" id="AE003852">
    <property type="protein sequence ID" value="AAF93888.1"/>
    <property type="molecule type" value="Genomic_DNA"/>
</dbReference>
<dbReference type="PIR" id="D82289">
    <property type="entry name" value="D82289"/>
</dbReference>
<dbReference type="RefSeq" id="NP_230372.1">
    <property type="nucleotide sequence ID" value="NC_002505.1"/>
</dbReference>
<dbReference type="SMR" id="Q9KU07"/>
<dbReference type="STRING" id="243277.VC_0723"/>
<dbReference type="DNASU" id="2615732"/>
<dbReference type="EnsemblBacteria" id="AAF93888">
    <property type="protein sequence ID" value="AAF93888"/>
    <property type="gene ID" value="VC_0723"/>
</dbReference>
<dbReference type="KEGG" id="vch:VC_0723"/>
<dbReference type="PATRIC" id="fig|243277.26.peg.691"/>
<dbReference type="eggNOG" id="COG0855">
    <property type="taxonomic scope" value="Bacteria"/>
</dbReference>
<dbReference type="HOGENOM" id="CLU_009678_6_1_6"/>
<dbReference type="Proteomes" id="UP000000584">
    <property type="component" value="Chromosome 1"/>
</dbReference>
<dbReference type="GO" id="GO:0016020">
    <property type="term" value="C:membrane"/>
    <property type="evidence" value="ECO:0000318"/>
    <property type="project" value="GO_Central"/>
</dbReference>
<dbReference type="GO" id="GO:0009358">
    <property type="term" value="C:polyphosphate kinase complex"/>
    <property type="evidence" value="ECO:0007669"/>
    <property type="project" value="InterPro"/>
</dbReference>
<dbReference type="GO" id="GO:0005524">
    <property type="term" value="F:ATP binding"/>
    <property type="evidence" value="ECO:0007669"/>
    <property type="project" value="UniProtKB-KW"/>
</dbReference>
<dbReference type="GO" id="GO:0046872">
    <property type="term" value="F:metal ion binding"/>
    <property type="evidence" value="ECO:0007669"/>
    <property type="project" value="UniProtKB-KW"/>
</dbReference>
<dbReference type="GO" id="GO:0008976">
    <property type="term" value="F:polyphosphate kinase activity"/>
    <property type="evidence" value="ECO:0000318"/>
    <property type="project" value="GO_Central"/>
</dbReference>
<dbReference type="GO" id="GO:0006799">
    <property type="term" value="P:polyphosphate biosynthetic process"/>
    <property type="evidence" value="ECO:0000318"/>
    <property type="project" value="GO_Central"/>
</dbReference>
<dbReference type="CDD" id="cd09164">
    <property type="entry name" value="PLDc_EcPPK1_C1_like"/>
    <property type="match status" value="1"/>
</dbReference>
<dbReference type="CDD" id="cd09167">
    <property type="entry name" value="PLDc_EcPPK1_C2_like"/>
    <property type="match status" value="1"/>
</dbReference>
<dbReference type="FunFam" id="1.20.58.310:FF:000001">
    <property type="entry name" value="Polyphosphate kinase"/>
    <property type="match status" value="1"/>
</dbReference>
<dbReference type="FunFam" id="3.30.870.10:FF:000001">
    <property type="entry name" value="Polyphosphate kinase"/>
    <property type="match status" value="1"/>
</dbReference>
<dbReference type="Gene3D" id="3.30.870.10">
    <property type="entry name" value="Endonuclease Chain A"/>
    <property type="match status" value="2"/>
</dbReference>
<dbReference type="Gene3D" id="3.30.1840.10">
    <property type="entry name" value="Polyphosphate kinase middle domain"/>
    <property type="match status" value="1"/>
</dbReference>
<dbReference type="Gene3D" id="1.20.58.310">
    <property type="entry name" value="Polyphosphate kinase N-terminal domain"/>
    <property type="match status" value="1"/>
</dbReference>
<dbReference type="HAMAP" id="MF_00347">
    <property type="entry name" value="Polyphosphate_kinase"/>
    <property type="match status" value="1"/>
</dbReference>
<dbReference type="InterPro" id="IPR001736">
    <property type="entry name" value="PLipase_D/transphosphatidylase"/>
</dbReference>
<dbReference type="InterPro" id="IPR003414">
    <property type="entry name" value="PP_kinase"/>
</dbReference>
<dbReference type="InterPro" id="IPR041108">
    <property type="entry name" value="PP_kinase_C_1"/>
</dbReference>
<dbReference type="InterPro" id="IPR024953">
    <property type="entry name" value="PP_kinase_middle"/>
</dbReference>
<dbReference type="InterPro" id="IPR036830">
    <property type="entry name" value="PP_kinase_middle_dom_sf"/>
</dbReference>
<dbReference type="InterPro" id="IPR025200">
    <property type="entry name" value="PPK_C_dom2"/>
</dbReference>
<dbReference type="InterPro" id="IPR025198">
    <property type="entry name" value="PPK_N_dom"/>
</dbReference>
<dbReference type="InterPro" id="IPR036832">
    <property type="entry name" value="PPK_N_dom_sf"/>
</dbReference>
<dbReference type="NCBIfam" id="TIGR03705">
    <property type="entry name" value="poly_P_kin"/>
    <property type="match status" value="1"/>
</dbReference>
<dbReference type="NCBIfam" id="NF003917">
    <property type="entry name" value="PRK05443.1-1"/>
    <property type="match status" value="1"/>
</dbReference>
<dbReference type="PANTHER" id="PTHR30218">
    <property type="entry name" value="POLYPHOSPHATE KINASE"/>
    <property type="match status" value="1"/>
</dbReference>
<dbReference type="PANTHER" id="PTHR30218:SF0">
    <property type="entry name" value="POLYPHOSPHATE KINASE"/>
    <property type="match status" value="1"/>
</dbReference>
<dbReference type="Pfam" id="PF02503">
    <property type="entry name" value="PP_kinase"/>
    <property type="match status" value="1"/>
</dbReference>
<dbReference type="Pfam" id="PF13090">
    <property type="entry name" value="PP_kinase_C"/>
    <property type="match status" value="1"/>
</dbReference>
<dbReference type="Pfam" id="PF17941">
    <property type="entry name" value="PP_kinase_C_1"/>
    <property type="match status" value="1"/>
</dbReference>
<dbReference type="Pfam" id="PF13089">
    <property type="entry name" value="PP_kinase_N"/>
    <property type="match status" value="1"/>
</dbReference>
<dbReference type="PIRSF" id="PIRSF015589">
    <property type="entry name" value="PP_kinase"/>
    <property type="match status" value="1"/>
</dbReference>
<dbReference type="SUPFAM" id="SSF56024">
    <property type="entry name" value="Phospholipase D/nuclease"/>
    <property type="match status" value="2"/>
</dbReference>
<dbReference type="SUPFAM" id="SSF143724">
    <property type="entry name" value="PHP14-like"/>
    <property type="match status" value="1"/>
</dbReference>
<dbReference type="SUPFAM" id="SSF140356">
    <property type="entry name" value="PPK N-terminal domain-like"/>
    <property type="match status" value="1"/>
</dbReference>
<dbReference type="PROSITE" id="PS50035">
    <property type="entry name" value="PLD"/>
    <property type="match status" value="2"/>
</dbReference>
<gene>
    <name evidence="1" type="primary">ppk</name>
    <name type="ordered locus">VC_0723</name>
</gene>
<sequence>MSADKLYIDKELSWLSFNERVLQEAADKTVPLIERIRFLGIFSNNLDEFYKVRFADVKRQILINRERGGNDISKHLLSRMQSKALKLNQDFDNLYNELILEMARRRIFLVNETQLDEIQLKWVKKYFHKEVLPHVTPIMLRDDIDVMQFLKDEYAYIAVEMRSGDEFKYALIEIPTDQLPRFVMLPEQKGKRRKTIILLDNIIRLCLDEIFRGFYDYDTLNGYAMKMTRDAEYDLRHEVEYSLLEQMSEGLSQRLTALPVRFVYEREMPEAMLKFLCYKLKISHYDSLIPGGRYHNFKDFISFPNVGRDYLENKPLPPMTCADFEGYANAFDAIRAQDILLHYPYHSFEHMTELVRQASFDPKVVSIKINIYRVAKDSKLMNSLVDAVHNGKRVVVVVELQARFDEEANIEWSRILTDAGVHVIFGVPGMKIHAKLLLITRKEGDEFVRYAHIGTGNFHERTARIYTDFALLTANQELAAEVRAVFGYIENPFRPVKFNHLIVSPRNSRTQIYRLLDSEIANAKAGKKAAITLKVNNLVDKGLINKLYGASAAGVKIRMIIRGMCSLVPGVEGVSDNIEIISIIDRFLEHPRVLVVHNDGNPQVFISSADWMERNIDHRIEVMAPIRDERLKQRIIDILNIQFIDTVKARRIDKEMSNQYVERGNRRKVRSQIAIYDYLKNVEKQTRKAKGQQETNDNSSQ</sequence>
<comment type="function">
    <text evidence="1">Catalyzes the reversible transfer of the terminal phosphate of ATP to form a long-chain polyphosphate (polyP).</text>
</comment>
<comment type="catalytic activity">
    <reaction evidence="1">
        <text>[phosphate](n) + ATP = [phosphate](n+1) + ADP</text>
        <dbReference type="Rhea" id="RHEA:19573"/>
        <dbReference type="Rhea" id="RHEA-COMP:9859"/>
        <dbReference type="Rhea" id="RHEA-COMP:14280"/>
        <dbReference type="ChEBI" id="CHEBI:16838"/>
        <dbReference type="ChEBI" id="CHEBI:30616"/>
        <dbReference type="ChEBI" id="CHEBI:456216"/>
        <dbReference type="EC" id="2.7.4.1"/>
    </reaction>
</comment>
<comment type="cofactor">
    <cofactor evidence="1">
        <name>Mg(2+)</name>
        <dbReference type="ChEBI" id="CHEBI:18420"/>
    </cofactor>
</comment>
<comment type="PTM">
    <text evidence="1">An intermediate of this reaction is the autophosphorylated ppk in which a phosphate is covalently linked to a histidine residue through a N-P bond.</text>
</comment>
<comment type="similarity">
    <text evidence="1">Belongs to the polyphosphate kinase 1 (PPK1) family.</text>
</comment>
<proteinExistence type="inferred from homology"/>
<keyword id="KW-0067">ATP-binding</keyword>
<keyword id="KW-0418">Kinase</keyword>
<keyword id="KW-0460">Magnesium</keyword>
<keyword id="KW-0479">Metal-binding</keyword>
<keyword id="KW-0547">Nucleotide-binding</keyword>
<keyword id="KW-0597">Phosphoprotein</keyword>
<keyword id="KW-1185">Reference proteome</keyword>
<keyword id="KW-0677">Repeat</keyword>
<keyword id="KW-0808">Transferase</keyword>